<proteinExistence type="inferred from homology"/>
<accession>A8FR95</accession>
<reference key="1">
    <citation type="submission" date="2007-08" db="EMBL/GenBank/DDBJ databases">
        <title>Complete sequence of Shewanella sediminis HAW-EB3.</title>
        <authorList>
            <consortium name="US DOE Joint Genome Institute"/>
            <person name="Copeland A."/>
            <person name="Lucas S."/>
            <person name="Lapidus A."/>
            <person name="Barry K."/>
            <person name="Glavina del Rio T."/>
            <person name="Dalin E."/>
            <person name="Tice H."/>
            <person name="Pitluck S."/>
            <person name="Chertkov O."/>
            <person name="Brettin T."/>
            <person name="Bruce D."/>
            <person name="Detter J.C."/>
            <person name="Han C."/>
            <person name="Schmutz J."/>
            <person name="Larimer F."/>
            <person name="Land M."/>
            <person name="Hauser L."/>
            <person name="Kyrpides N."/>
            <person name="Kim E."/>
            <person name="Zhao J.-S."/>
            <person name="Richardson P."/>
        </authorList>
    </citation>
    <scope>NUCLEOTIDE SEQUENCE [LARGE SCALE GENOMIC DNA]</scope>
    <source>
        <strain>HAW-EB3</strain>
    </source>
</reference>
<feature type="chain" id="PRO_1000079468" description="Small ribosomal subunit protein bS6">
    <location>
        <begin position="1"/>
        <end position="139"/>
    </location>
</feature>
<feature type="region of interest" description="Disordered" evidence="2">
    <location>
        <begin position="97"/>
        <end position="139"/>
    </location>
</feature>
<feature type="compositionally biased region" description="Basic and acidic residues" evidence="2">
    <location>
        <begin position="104"/>
        <end position="139"/>
    </location>
</feature>
<organism>
    <name type="scientific">Shewanella sediminis (strain HAW-EB3)</name>
    <dbReference type="NCBI Taxonomy" id="425104"/>
    <lineage>
        <taxon>Bacteria</taxon>
        <taxon>Pseudomonadati</taxon>
        <taxon>Pseudomonadota</taxon>
        <taxon>Gammaproteobacteria</taxon>
        <taxon>Alteromonadales</taxon>
        <taxon>Shewanellaceae</taxon>
        <taxon>Shewanella</taxon>
    </lineage>
</organism>
<gene>
    <name evidence="1" type="primary">rpsF</name>
    <name type="ordered locus">Ssed_0757</name>
</gene>
<comment type="function">
    <text evidence="1">Binds together with bS18 to 16S ribosomal RNA.</text>
</comment>
<comment type="similarity">
    <text evidence="1">Belongs to the bacterial ribosomal protein bS6 family.</text>
</comment>
<dbReference type="EMBL" id="CP000821">
    <property type="protein sequence ID" value="ABV35368.1"/>
    <property type="molecule type" value="Genomic_DNA"/>
</dbReference>
<dbReference type="RefSeq" id="WP_012141105.1">
    <property type="nucleotide sequence ID" value="NC_009831.1"/>
</dbReference>
<dbReference type="SMR" id="A8FR95"/>
<dbReference type="STRING" id="425104.Ssed_0757"/>
<dbReference type="KEGG" id="sse:Ssed_0757"/>
<dbReference type="eggNOG" id="COG0360">
    <property type="taxonomic scope" value="Bacteria"/>
</dbReference>
<dbReference type="HOGENOM" id="CLU_113441_6_0_6"/>
<dbReference type="OrthoDB" id="9812702at2"/>
<dbReference type="Proteomes" id="UP000002015">
    <property type="component" value="Chromosome"/>
</dbReference>
<dbReference type="GO" id="GO:0022627">
    <property type="term" value="C:cytosolic small ribosomal subunit"/>
    <property type="evidence" value="ECO:0007669"/>
    <property type="project" value="TreeGrafter"/>
</dbReference>
<dbReference type="GO" id="GO:0070181">
    <property type="term" value="F:small ribosomal subunit rRNA binding"/>
    <property type="evidence" value="ECO:0007669"/>
    <property type="project" value="TreeGrafter"/>
</dbReference>
<dbReference type="GO" id="GO:0003735">
    <property type="term" value="F:structural constituent of ribosome"/>
    <property type="evidence" value="ECO:0007669"/>
    <property type="project" value="InterPro"/>
</dbReference>
<dbReference type="GO" id="GO:0006412">
    <property type="term" value="P:translation"/>
    <property type="evidence" value="ECO:0007669"/>
    <property type="project" value="UniProtKB-UniRule"/>
</dbReference>
<dbReference type="CDD" id="cd00473">
    <property type="entry name" value="bS6"/>
    <property type="match status" value="1"/>
</dbReference>
<dbReference type="FunFam" id="3.30.70.60:FF:000003">
    <property type="entry name" value="30S ribosomal protein S6"/>
    <property type="match status" value="1"/>
</dbReference>
<dbReference type="Gene3D" id="3.30.70.60">
    <property type="match status" value="1"/>
</dbReference>
<dbReference type="HAMAP" id="MF_00360">
    <property type="entry name" value="Ribosomal_bS6"/>
    <property type="match status" value="1"/>
</dbReference>
<dbReference type="InterPro" id="IPR000529">
    <property type="entry name" value="Ribosomal_bS6"/>
</dbReference>
<dbReference type="InterPro" id="IPR035980">
    <property type="entry name" value="Ribosomal_bS6_sf"/>
</dbReference>
<dbReference type="InterPro" id="IPR020814">
    <property type="entry name" value="Ribosomal_S6_plastid/chlpt"/>
</dbReference>
<dbReference type="InterPro" id="IPR014717">
    <property type="entry name" value="Transl_elong_EF1B/ribsomal_bS6"/>
</dbReference>
<dbReference type="NCBIfam" id="TIGR00166">
    <property type="entry name" value="S6"/>
    <property type="match status" value="1"/>
</dbReference>
<dbReference type="PANTHER" id="PTHR21011">
    <property type="entry name" value="MITOCHONDRIAL 28S RIBOSOMAL PROTEIN S6"/>
    <property type="match status" value="1"/>
</dbReference>
<dbReference type="PANTHER" id="PTHR21011:SF1">
    <property type="entry name" value="SMALL RIBOSOMAL SUBUNIT PROTEIN BS6M"/>
    <property type="match status" value="1"/>
</dbReference>
<dbReference type="Pfam" id="PF01250">
    <property type="entry name" value="Ribosomal_S6"/>
    <property type="match status" value="1"/>
</dbReference>
<dbReference type="SUPFAM" id="SSF54995">
    <property type="entry name" value="Ribosomal protein S6"/>
    <property type="match status" value="1"/>
</dbReference>
<name>RS6_SHESH</name>
<protein>
    <recommendedName>
        <fullName evidence="1">Small ribosomal subunit protein bS6</fullName>
    </recommendedName>
    <alternativeName>
        <fullName evidence="3">30S ribosomal protein S6</fullName>
    </alternativeName>
</protein>
<evidence type="ECO:0000255" key="1">
    <source>
        <dbReference type="HAMAP-Rule" id="MF_00360"/>
    </source>
</evidence>
<evidence type="ECO:0000256" key="2">
    <source>
        <dbReference type="SAM" id="MobiDB-lite"/>
    </source>
</evidence>
<evidence type="ECO:0000305" key="3"/>
<keyword id="KW-1185">Reference proteome</keyword>
<keyword id="KW-0687">Ribonucleoprotein</keyword>
<keyword id="KW-0689">Ribosomal protein</keyword>
<keyword id="KW-0694">RNA-binding</keyword>
<keyword id="KW-0699">rRNA-binding</keyword>
<sequence length="139" mass="15772">MRHYEIVFLVHPDQSEQVPGMIERYTGILTQAGGQVHRLEDWGRRQLAYPIIELHKAHYVLMNVEASAESVEELETAFRFNDAVLRSMVMRTKAAITEASPMAKAKDERDSRRSSEGERRSAPAEATEEVKETAEKAAE</sequence>